<evidence type="ECO:0000250" key="1"/>
<evidence type="ECO:0000250" key="2">
    <source>
        <dbReference type="UniProtKB" id="Q8IZA3"/>
    </source>
</evidence>
<evidence type="ECO:0000255" key="3"/>
<evidence type="ECO:0000255" key="4">
    <source>
        <dbReference type="PROSITE-ProRule" id="PRU00837"/>
    </source>
</evidence>
<evidence type="ECO:0000256" key="5">
    <source>
        <dbReference type="SAM" id="MobiDB-lite"/>
    </source>
</evidence>
<evidence type="ECO:0000269" key="6">
    <source>
    </source>
</evidence>
<evidence type="ECO:0000269" key="7">
    <source>
    </source>
</evidence>
<evidence type="ECO:0000269" key="8">
    <source>
    </source>
</evidence>
<evidence type="ECO:0000269" key="9">
    <source>
    </source>
</evidence>
<evidence type="ECO:0000303" key="10">
    <source>
    </source>
</evidence>
<evidence type="ECO:0000305" key="11"/>
<evidence type="ECO:0000312" key="12">
    <source>
        <dbReference type="MGI" id="MGI:2176207"/>
    </source>
</evidence>
<feature type="chain" id="PRO_0000343413" description="Histone H1.8">
    <location>
        <begin position="1"/>
        <end position="304"/>
    </location>
</feature>
<feature type="domain" description="H15" evidence="4">
    <location>
        <begin position="45"/>
        <end position="123"/>
    </location>
</feature>
<feature type="region of interest" description="Disordered" evidence="5">
    <location>
        <begin position="1"/>
        <end position="38"/>
    </location>
</feature>
<feature type="region of interest" description="Disordered" evidence="5">
    <location>
        <begin position="110"/>
        <end position="248"/>
    </location>
</feature>
<feature type="region of interest" description="Disordered" evidence="5">
    <location>
        <begin position="270"/>
        <end position="304"/>
    </location>
</feature>
<feature type="short sequence motif" description="Nuclear localization signal" evidence="3">
    <location>
        <begin position="154"/>
        <end position="170"/>
    </location>
</feature>
<feature type="compositionally biased region" description="Low complexity" evidence="5">
    <location>
        <begin position="1"/>
        <end position="24"/>
    </location>
</feature>
<feature type="compositionally biased region" description="Low complexity" evidence="5">
    <location>
        <begin position="132"/>
        <end position="144"/>
    </location>
</feature>
<feature type="compositionally biased region" description="Basic and acidic residues" evidence="5">
    <location>
        <begin position="153"/>
        <end position="166"/>
    </location>
</feature>
<feature type="compositionally biased region" description="Basic and acidic residues" evidence="5">
    <location>
        <begin position="189"/>
        <end position="202"/>
    </location>
</feature>
<feature type="compositionally biased region" description="Basic and acidic residues" evidence="5">
    <location>
        <begin position="225"/>
        <end position="237"/>
    </location>
</feature>
<feature type="compositionally biased region" description="Polar residues" evidence="5">
    <location>
        <begin position="270"/>
        <end position="281"/>
    </location>
</feature>
<feature type="splice variant" id="VSP_034593" description="In isoform 2." evidence="10">
    <original>QNSVASLAKRKMADMAHTVTVVQGAETVQETKVPTPSQDIGHKVQPIPRVRKAKTPENTQA</original>
    <variation>GPE</variation>
    <location>
        <begin position="244"/>
        <end position="304"/>
    </location>
</feature>
<name>H18_MOUSE</name>
<sequence length="304" mass="32223">MAPGSVSSVSSSSFPSRDTSPSGSCGLPGADKPGPSCRRIQAGQRNPTMLHMVLEALKAREARQGTSVVAIKVYIQHKYPTVDTTRFKYLLKQALETGVRRGLLTRPAHSKAKGATGSFKLVPKPKTKKACAPKAGRGAAGAKETGSKKSGLLKKDQVGKATMEKGQKRRAYPCKAATLEMAPKKAKAKPKEVRKAPLKQDKAAGAPLTANGGQKVKRSGSRQEANAHGKTKGEKSKPLASKVQNSVASLAKRKMADMAHTVTVVQGAETVQETKVPTPSQDIGHKVQPIPRVRKAKTPENTQA</sequence>
<organism>
    <name type="scientific">Mus musculus</name>
    <name type="common">Mouse</name>
    <dbReference type="NCBI Taxonomy" id="10090"/>
    <lineage>
        <taxon>Eukaryota</taxon>
        <taxon>Metazoa</taxon>
        <taxon>Chordata</taxon>
        <taxon>Craniata</taxon>
        <taxon>Vertebrata</taxon>
        <taxon>Euteleostomi</taxon>
        <taxon>Mammalia</taxon>
        <taxon>Eutheria</taxon>
        <taxon>Euarchontoglires</taxon>
        <taxon>Glires</taxon>
        <taxon>Rodentia</taxon>
        <taxon>Myomorpha</taxon>
        <taxon>Muroidea</taxon>
        <taxon>Muridae</taxon>
        <taxon>Murinae</taxon>
        <taxon>Mus</taxon>
        <taxon>Mus</taxon>
    </lineage>
</organism>
<comment type="function">
    <text evidence="6 7 8 9">May play a key role in the control of gene expression during oogenesis and early embryogenesis, presumably through the perturbation of chromatin structure. Essential for meiotic maturation of germinal vesicle-stage oocytes. The somatic type linker histone H1c is rapidly replaced by H1oo in a donor nucleus transplanted into an oocyte. The greater mobility of H1oo as compared to H1c may contribute to this rapid replacement and increased instability of the embryonic chromatin structure. The rapid replacement of H1c with H1oo may play an important role in nuclear remodeling.</text>
</comment>
<comment type="subcellular location">
    <subcellularLocation>
        <location evidence="1">Cytoplasm</location>
    </subcellularLocation>
    <subcellularLocation>
        <location>Nucleus</location>
    </subcellularLocation>
    <subcellularLocation>
        <location>Chromosome</location>
    </subcellularLocation>
    <text>In the germinal vesicle oocyte, localizes to the condensed chromosomes. In the 1-cell embryo found in condensed maternal metaphase chromatin but not in the sperm head. Following second polar body extrusion, detected in the swollen sperm head as well as in the second polar body. Reduced expression in the nucleus in 2-cell embryo is seen as compared to 1-cell embryo.</text>
</comment>
<comment type="alternative products">
    <event type="alternative splicing"/>
    <isoform>
        <id>Q8VIK3-1</id>
        <name>1</name>
        <name>Alpha</name>
        <sequence type="displayed"/>
    </isoform>
    <isoform>
        <id>Q8VIK3-2</id>
        <name>2</name>
        <name>Beta</name>
        <sequence type="described" ref="VSP_034593"/>
    </isoform>
</comment>
<comment type="tissue specificity">
    <text evidence="6 8">Oocyte-specific.</text>
</comment>
<comment type="developmental stage">
    <text evidence="6">Expressed as early as the germinal vesicle (GV) stage oocyte, and persists into the metaphase II stage oocyte, the oocytic polar bodies, and the 2-cell embryo, and disappears at the 4- to 8-cell embryonic stage.</text>
</comment>
<comment type="similarity">
    <text evidence="4">Belongs to the histone H1/H5 family.</text>
</comment>
<keyword id="KW-0025">Alternative splicing</keyword>
<keyword id="KW-0158">Chromosome</keyword>
<keyword id="KW-0963">Cytoplasm</keyword>
<keyword id="KW-0238">DNA-binding</keyword>
<keyword id="KW-0469">Meiosis</keyword>
<keyword id="KW-0539">Nucleus</keyword>
<keyword id="KW-1185">Reference proteome</keyword>
<accession>Q8VIK3</accession>
<protein>
    <recommendedName>
        <fullName evidence="11">Histone H1.8</fullName>
    </recommendedName>
    <alternativeName>
        <fullName>Histone H1oo</fullName>
    </alternativeName>
    <alternativeName>
        <fullName>Oocyte-specific histone H1</fullName>
    </alternativeName>
    <alternativeName>
        <fullName>Oocyte-specific linker histone H1</fullName>
    </alternativeName>
</protein>
<proteinExistence type="evidence at transcript level"/>
<gene>
    <name evidence="2" type="primary">H1.8</name>
    <name evidence="12" type="synonym">H1f8</name>
    <name evidence="10" type="synonym">H1foo</name>
    <name evidence="12" type="synonym">H1oo</name>
</gene>
<reference key="1">
    <citation type="journal article" date="2001" name="Development">
        <title>A mammalian oocyte-specific linker histone gene H1oo: homology with the genes for the oocyte-specific cleavage stage histone (cs-H1) of sea urchin and the B4/H1M histone of the frog.</title>
        <authorList>
            <person name="Tanaka M."/>
            <person name="Hennebold J.D."/>
            <person name="Macfarlane J."/>
            <person name="Adashi E.Y."/>
        </authorList>
    </citation>
    <scope>NUCLEOTIDE SEQUENCE [MRNA] (ISOFORM 1)</scope>
    <scope>FUNCTION</scope>
    <scope>SUBCELLULAR LOCATION</scope>
    <scope>TISSUE SPECIFICITY</scope>
    <scope>DEVELOPMENTAL STAGE</scope>
    <source>
        <strain>C57BL/6J</strain>
        <tissue>Ovary</tissue>
    </source>
</reference>
<reference key="2">
    <citation type="journal article" date="2005" name="Biol. Reprod.">
        <title>H1FOO is coupled to the initiation of oocytic growth.</title>
        <authorList>
            <person name="Tanaka M."/>
            <person name="Kihara M."/>
            <person name="Hennebold J.D."/>
            <person name="Eppig J.J."/>
            <person name="Viveiros M.M."/>
            <person name="Emery B.R."/>
            <person name="Carrell D.T."/>
            <person name="Kirkman N.J."/>
            <person name="Meczekalski B."/>
            <person name="Zhou J."/>
            <person name="Bondy C.A."/>
            <person name="Becker M."/>
            <person name="Schultz R.M."/>
            <person name="Misteli T."/>
            <person name="De La Fuente R."/>
            <person name="King G.J."/>
            <person name="Adashi E.Y."/>
        </authorList>
    </citation>
    <scope>NUCLEOTIDE SEQUENCE [MRNA] (ISOFORMS 1 AND 2)</scope>
    <scope>FUNCTION</scope>
    <scope>SUBCELLULAR LOCATION</scope>
    <scope>TISSUE SPECIFICITY</scope>
</reference>
<reference key="3">
    <citation type="journal article" date="2005" name="Science">
        <title>The transcriptional landscape of the mammalian genome.</title>
        <authorList>
            <person name="Carninci P."/>
            <person name="Kasukawa T."/>
            <person name="Katayama S."/>
            <person name="Gough J."/>
            <person name="Frith M.C."/>
            <person name="Maeda N."/>
            <person name="Oyama R."/>
            <person name="Ravasi T."/>
            <person name="Lenhard B."/>
            <person name="Wells C."/>
            <person name="Kodzius R."/>
            <person name="Shimokawa K."/>
            <person name="Bajic V.B."/>
            <person name="Brenner S.E."/>
            <person name="Batalov S."/>
            <person name="Forrest A.R."/>
            <person name="Zavolan M."/>
            <person name="Davis M.J."/>
            <person name="Wilming L.G."/>
            <person name="Aidinis V."/>
            <person name="Allen J.E."/>
            <person name="Ambesi-Impiombato A."/>
            <person name="Apweiler R."/>
            <person name="Aturaliya R.N."/>
            <person name="Bailey T.L."/>
            <person name="Bansal M."/>
            <person name="Baxter L."/>
            <person name="Beisel K.W."/>
            <person name="Bersano T."/>
            <person name="Bono H."/>
            <person name="Chalk A.M."/>
            <person name="Chiu K.P."/>
            <person name="Choudhary V."/>
            <person name="Christoffels A."/>
            <person name="Clutterbuck D.R."/>
            <person name="Crowe M.L."/>
            <person name="Dalla E."/>
            <person name="Dalrymple B.P."/>
            <person name="de Bono B."/>
            <person name="Della Gatta G."/>
            <person name="di Bernardo D."/>
            <person name="Down T."/>
            <person name="Engstrom P."/>
            <person name="Fagiolini M."/>
            <person name="Faulkner G."/>
            <person name="Fletcher C.F."/>
            <person name="Fukushima T."/>
            <person name="Furuno M."/>
            <person name="Futaki S."/>
            <person name="Gariboldi M."/>
            <person name="Georgii-Hemming P."/>
            <person name="Gingeras T.R."/>
            <person name="Gojobori T."/>
            <person name="Green R.E."/>
            <person name="Gustincich S."/>
            <person name="Harbers M."/>
            <person name="Hayashi Y."/>
            <person name="Hensch T.K."/>
            <person name="Hirokawa N."/>
            <person name="Hill D."/>
            <person name="Huminiecki L."/>
            <person name="Iacono M."/>
            <person name="Ikeo K."/>
            <person name="Iwama A."/>
            <person name="Ishikawa T."/>
            <person name="Jakt M."/>
            <person name="Kanapin A."/>
            <person name="Katoh M."/>
            <person name="Kawasawa Y."/>
            <person name="Kelso J."/>
            <person name="Kitamura H."/>
            <person name="Kitano H."/>
            <person name="Kollias G."/>
            <person name="Krishnan S.P."/>
            <person name="Kruger A."/>
            <person name="Kummerfeld S.K."/>
            <person name="Kurochkin I.V."/>
            <person name="Lareau L.F."/>
            <person name="Lazarevic D."/>
            <person name="Lipovich L."/>
            <person name="Liu J."/>
            <person name="Liuni S."/>
            <person name="McWilliam S."/>
            <person name="Madan Babu M."/>
            <person name="Madera M."/>
            <person name="Marchionni L."/>
            <person name="Matsuda H."/>
            <person name="Matsuzawa S."/>
            <person name="Miki H."/>
            <person name="Mignone F."/>
            <person name="Miyake S."/>
            <person name="Morris K."/>
            <person name="Mottagui-Tabar S."/>
            <person name="Mulder N."/>
            <person name="Nakano N."/>
            <person name="Nakauchi H."/>
            <person name="Ng P."/>
            <person name="Nilsson R."/>
            <person name="Nishiguchi S."/>
            <person name="Nishikawa S."/>
            <person name="Nori F."/>
            <person name="Ohara O."/>
            <person name="Okazaki Y."/>
            <person name="Orlando V."/>
            <person name="Pang K.C."/>
            <person name="Pavan W.J."/>
            <person name="Pavesi G."/>
            <person name="Pesole G."/>
            <person name="Petrovsky N."/>
            <person name="Piazza S."/>
            <person name="Reed J."/>
            <person name="Reid J.F."/>
            <person name="Ring B.Z."/>
            <person name="Ringwald M."/>
            <person name="Rost B."/>
            <person name="Ruan Y."/>
            <person name="Salzberg S.L."/>
            <person name="Sandelin A."/>
            <person name="Schneider C."/>
            <person name="Schoenbach C."/>
            <person name="Sekiguchi K."/>
            <person name="Semple C.A."/>
            <person name="Seno S."/>
            <person name="Sessa L."/>
            <person name="Sheng Y."/>
            <person name="Shibata Y."/>
            <person name="Shimada H."/>
            <person name="Shimada K."/>
            <person name="Silva D."/>
            <person name="Sinclair B."/>
            <person name="Sperling S."/>
            <person name="Stupka E."/>
            <person name="Sugiura K."/>
            <person name="Sultana R."/>
            <person name="Takenaka Y."/>
            <person name="Taki K."/>
            <person name="Tammoja K."/>
            <person name="Tan S.L."/>
            <person name="Tang S."/>
            <person name="Taylor M.S."/>
            <person name="Tegner J."/>
            <person name="Teichmann S.A."/>
            <person name="Ueda H.R."/>
            <person name="van Nimwegen E."/>
            <person name="Verardo R."/>
            <person name="Wei C.L."/>
            <person name="Yagi K."/>
            <person name="Yamanishi H."/>
            <person name="Zabarovsky E."/>
            <person name="Zhu S."/>
            <person name="Zimmer A."/>
            <person name="Hide W."/>
            <person name="Bult C."/>
            <person name="Grimmond S.M."/>
            <person name="Teasdale R.D."/>
            <person name="Liu E.T."/>
            <person name="Brusic V."/>
            <person name="Quackenbush J."/>
            <person name="Wahlestedt C."/>
            <person name="Mattick J.S."/>
            <person name="Hume D.A."/>
            <person name="Kai C."/>
            <person name="Sasaki D."/>
            <person name="Tomaru Y."/>
            <person name="Fukuda S."/>
            <person name="Kanamori-Katayama M."/>
            <person name="Suzuki M."/>
            <person name="Aoki J."/>
            <person name="Arakawa T."/>
            <person name="Iida J."/>
            <person name="Imamura K."/>
            <person name="Itoh M."/>
            <person name="Kato T."/>
            <person name="Kawaji H."/>
            <person name="Kawagashira N."/>
            <person name="Kawashima T."/>
            <person name="Kojima M."/>
            <person name="Kondo S."/>
            <person name="Konno H."/>
            <person name="Nakano K."/>
            <person name="Ninomiya N."/>
            <person name="Nishio T."/>
            <person name="Okada M."/>
            <person name="Plessy C."/>
            <person name="Shibata K."/>
            <person name="Shiraki T."/>
            <person name="Suzuki S."/>
            <person name="Tagami M."/>
            <person name="Waki K."/>
            <person name="Watahiki A."/>
            <person name="Okamura-Oho Y."/>
            <person name="Suzuki H."/>
            <person name="Kawai J."/>
            <person name="Hayashizaki Y."/>
        </authorList>
    </citation>
    <scope>NUCLEOTIDE SEQUENCE [LARGE SCALE MRNA] (ISOFORM 1)</scope>
    <source>
        <strain>C57BL/6J</strain>
    </source>
</reference>
<reference key="4">
    <citation type="submission" date="2005-07" db="EMBL/GenBank/DDBJ databases">
        <authorList>
            <person name="Mural R.J."/>
            <person name="Adams M.D."/>
            <person name="Myers E.W."/>
            <person name="Smith H.O."/>
            <person name="Venter J.C."/>
        </authorList>
    </citation>
    <scope>NUCLEOTIDE SEQUENCE [LARGE SCALE GENOMIC DNA]</scope>
</reference>
<reference key="5">
    <citation type="journal article" date="2004" name="Genome Res.">
        <title>The status, quality, and expansion of the NIH full-length cDNA project: the Mammalian Gene Collection (MGC).</title>
        <authorList>
            <consortium name="The MGC Project Team"/>
        </authorList>
    </citation>
    <scope>NUCLEOTIDE SEQUENCE [LARGE SCALE MRNA] (ISOFORM 1)</scope>
</reference>
<reference key="6">
    <citation type="journal article" date="2004" name="Dev. Biol.">
        <title>Rapid replacement of somatic linker histones with the oocyte-specific linker histone H1foo in nuclear transfer.</title>
        <authorList>
            <person name="Teranishi T."/>
            <person name="Tanaka M."/>
            <person name="Kimoto S."/>
            <person name="Ono Y."/>
            <person name="Miyakoshi K."/>
            <person name="Kono T."/>
            <person name="Yoshimura Y."/>
        </authorList>
    </citation>
    <scope>FUNCTION</scope>
    <scope>SUBCELLULAR LOCATION</scope>
</reference>
<reference key="7">
    <citation type="journal article" date="2007" name="J. Reprod. Dev.">
        <title>H1foo is indispensable for meiotic maturation of the mouse oocyte.</title>
        <authorList>
            <person name="Furuya M."/>
            <person name="Tanaka M."/>
            <person name="Teranishi T."/>
            <person name="Matsumoto K."/>
            <person name="Hosoi Y."/>
            <person name="Saeki K."/>
            <person name="Ishimoto H."/>
            <person name="Minegishi K."/>
            <person name="Iritani A."/>
            <person name="Yoshimura Y."/>
        </authorList>
    </citation>
    <scope>FUNCTION</scope>
</reference>
<dbReference type="EMBL" id="AY007195">
    <property type="protein sequence ID" value="AAG01890.1"/>
    <property type="molecule type" value="mRNA"/>
</dbReference>
<dbReference type="EMBL" id="AK135944">
    <property type="protein sequence ID" value="BAE22736.1"/>
    <property type="molecule type" value="mRNA"/>
</dbReference>
<dbReference type="EMBL" id="AK162137">
    <property type="protein sequence ID" value="BAE36747.1"/>
    <property type="molecule type" value="mRNA"/>
</dbReference>
<dbReference type="EMBL" id="CH466523">
    <property type="protein sequence ID" value="EDK99547.1"/>
    <property type="molecule type" value="Genomic_DNA"/>
</dbReference>
<dbReference type="EMBL" id="BC137916">
    <property type="protein sequence ID" value="AAI37917.1"/>
    <property type="molecule type" value="mRNA"/>
</dbReference>
<dbReference type="CCDS" id="CCDS20447.1">
    <molecule id="Q8VIK3-1"/>
</dbReference>
<dbReference type="CCDS" id="CCDS85133.1">
    <molecule id="Q8VIK3-2"/>
</dbReference>
<dbReference type="RefSeq" id="NP_001333631.1">
    <molecule id="Q8VIK3-2"/>
    <property type="nucleotide sequence ID" value="NM_001346702.1"/>
</dbReference>
<dbReference type="RefSeq" id="NP_612184.1">
    <molecule id="Q8VIK3-1"/>
    <property type="nucleotide sequence ID" value="NM_138311.3"/>
</dbReference>
<dbReference type="SMR" id="Q8VIK3"/>
<dbReference type="FunCoup" id="Q8VIK3">
    <property type="interactions" value="566"/>
</dbReference>
<dbReference type="STRING" id="10090.ENSMUSP00000036951"/>
<dbReference type="iPTMnet" id="Q8VIK3"/>
<dbReference type="PhosphoSitePlus" id="Q8VIK3"/>
<dbReference type="PaxDb" id="10090-ENSMUSP00000036951"/>
<dbReference type="ProteomicsDB" id="269643">
    <molecule id="Q8VIK3-1"/>
</dbReference>
<dbReference type="ProteomicsDB" id="269644">
    <molecule id="Q8VIK3-2"/>
</dbReference>
<dbReference type="Antibodypedia" id="33282">
    <property type="antibodies" value="173 antibodies from 25 providers"/>
</dbReference>
<dbReference type="DNASU" id="171506"/>
<dbReference type="Ensembl" id="ENSMUST00000037831.14">
    <molecule id="Q8VIK3-1"/>
    <property type="protein sequence ID" value="ENSMUSP00000036951.8"/>
    <property type="gene ID" value="ENSMUSG00000042279.14"/>
</dbReference>
<dbReference type="Ensembl" id="ENSMUST00000161969.4">
    <molecule id="Q8VIK3-2"/>
    <property type="protein sequence ID" value="ENSMUSP00000123797.2"/>
    <property type="gene ID" value="ENSMUSG00000042279.14"/>
</dbReference>
<dbReference type="GeneID" id="171506"/>
<dbReference type="KEGG" id="mmu:171506"/>
<dbReference type="UCSC" id="uc009djl.1">
    <molecule id="Q8VIK3-1"/>
    <property type="organism name" value="mouse"/>
</dbReference>
<dbReference type="UCSC" id="uc009djm.1">
    <molecule id="Q8VIK3-2"/>
    <property type="organism name" value="mouse"/>
</dbReference>
<dbReference type="AGR" id="MGI:2176207"/>
<dbReference type="CTD" id="171506"/>
<dbReference type="MGI" id="MGI:2176207">
    <property type="gene designation" value="H1f8"/>
</dbReference>
<dbReference type="VEuPathDB" id="HostDB:ENSMUSG00000042279"/>
<dbReference type="eggNOG" id="KOG4012">
    <property type="taxonomic scope" value="Eukaryota"/>
</dbReference>
<dbReference type="GeneTree" id="ENSGT00940000160900"/>
<dbReference type="HOGENOM" id="CLU_070976_1_0_1"/>
<dbReference type="InParanoid" id="Q8VIK3"/>
<dbReference type="OMA" id="MADMAHT"/>
<dbReference type="OrthoDB" id="1110759at2759"/>
<dbReference type="PhylomeDB" id="Q8VIK3"/>
<dbReference type="TreeFam" id="TF333386"/>
<dbReference type="BioGRID-ORCS" id="171506">
    <property type="hits" value="4 hits in 77 CRISPR screens"/>
</dbReference>
<dbReference type="ChiTaRS" id="H1foo">
    <property type="organism name" value="mouse"/>
</dbReference>
<dbReference type="PRO" id="PR:Q8VIK3"/>
<dbReference type="Proteomes" id="UP000000589">
    <property type="component" value="Chromosome 6"/>
</dbReference>
<dbReference type="RNAct" id="Q8VIK3">
    <property type="molecule type" value="protein"/>
</dbReference>
<dbReference type="Bgee" id="ENSMUSG00000042279">
    <property type="expression patterns" value="Expressed in animal zygote and 35 other cell types or tissues"/>
</dbReference>
<dbReference type="ExpressionAtlas" id="Q8VIK3">
    <property type="expression patterns" value="baseline and differential"/>
</dbReference>
<dbReference type="GO" id="GO:0005737">
    <property type="term" value="C:cytoplasm"/>
    <property type="evidence" value="ECO:0007669"/>
    <property type="project" value="UniProtKB-SubCell"/>
</dbReference>
<dbReference type="GO" id="GO:0001674">
    <property type="term" value="C:female germ cell nucleus"/>
    <property type="evidence" value="ECO:0000314"/>
    <property type="project" value="MGI"/>
</dbReference>
<dbReference type="GO" id="GO:0005654">
    <property type="term" value="C:nucleoplasm"/>
    <property type="evidence" value="ECO:0000304"/>
    <property type="project" value="Reactome"/>
</dbReference>
<dbReference type="GO" id="GO:0000786">
    <property type="term" value="C:nucleosome"/>
    <property type="evidence" value="ECO:0007669"/>
    <property type="project" value="InterPro"/>
</dbReference>
<dbReference type="GO" id="GO:0005634">
    <property type="term" value="C:nucleus"/>
    <property type="evidence" value="ECO:0000314"/>
    <property type="project" value="UniProtKB"/>
</dbReference>
<dbReference type="GO" id="GO:0003677">
    <property type="term" value="F:DNA binding"/>
    <property type="evidence" value="ECO:0000247"/>
    <property type="project" value="MGI"/>
</dbReference>
<dbReference type="GO" id="GO:0031492">
    <property type="term" value="F:nucleosomal DNA binding"/>
    <property type="evidence" value="ECO:0000314"/>
    <property type="project" value="UniProtKB"/>
</dbReference>
<dbReference type="GO" id="GO:0030527">
    <property type="term" value="F:structural constituent of chromatin"/>
    <property type="evidence" value="ECO:0000314"/>
    <property type="project" value="GO_Central"/>
</dbReference>
<dbReference type="GO" id="GO:0040029">
    <property type="term" value="P:epigenetic regulation of gene expression"/>
    <property type="evidence" value="ECO:0000315"/>
    <property type="project" value="GO_Central"/>
</dbReference>
<dbReference type="GO" id="GO:0051321">
    <property type="term" value="P:meiotic cell cycle"/>
    <property type="evidence" value="ECO:0007669"/>
    <property type="project" value="UniProtKB-KW"/>
</dbReference>
<dbReference type="GO" id="GO:0006334">
    <property type="term" value="P:nucleosome assembly"/>
    <property type="evidence" value="ECO:0000247"/>
    <property type="project" value="MGI"/>
</dbReference>
<dbReference type="CDD" id="cd00073">
    <property type="entry name" value="H15"/>
    <property type="match status" value="1"/>
</dbReference>
<dbReference type="FunFam" id="1.10.10.10:FF:000393">
    <property type="entry name" value="Oocyte-specific H1 histone"/>
    <property type="match status" value="1"/>
</dbReference>
<dbReference type="Gene3D" id="1.10.10.10">
    <property type="entry name" value="Winged helix-like DNA-binding domain superfamily/Winged helix DNA-binding domain"/>
    <property type="match status" value="1"/>
</dbReference>
<dbReference type="InterPro" id="IPR005818">
    <property type="entry name" value="Histone_H1/H5_H15"/>
</dbReference>
<dbReference type="InterPro" id="IPR036388">
    <property type="entry name" value="WH-like_DNA-bd_sf"/>
</dbReference>
<dbReference type="InterPro" id="IPR036390">
    <property type="entry name" value="WH_DNA-bd_sf"/>
</dbReference>
<dbReference type="Pfam" id="PF00538">
    <property type="entry name" value="Linker_histone"/>
    <property type="match status" value="1"/>
</dbReference>
<dbReference type="SMART" id="SM00526">
    <property type="entry name" value="H15"/>
    <property type="match status" value="1"/>
</dbReference>
<dbReference type="SUPFAM" id="SSF46785">
    <property type="entry name" value="Winged helix' DNA-binding domain"/>
    <property type="match status" value="1"/>
</dbReference>
<dbReference type="PROSITE" id="PS51504">
    <property type="entry name" value="H15"/>
    <property type="match status" value="1"/>
</dbReference>